<name>CLPX_MYCBT</name>
<dbReference type="EMBL" id="AP010918">
    <property type="protein sequence ID" value="BAH26753.1"/>
    <property type="molecule type" value="Genomic_DNA"/>
</dbReference>
<dbReference type="RefSeq" id="WP_011799265.1">
    <property type="nucleotide sequence ID" value="NZ_CP014566.1"/>
</dbReference>
<dbReference type="SMR" id="C1AES4"/>
<dbReference type="KEGG" id="mbt:JTY_2471"/>
<dbReference type="HOGENOM" id="CLU_014218_8_2_11"/>
<dbReference type="GO" id="GO:0009376">
    <property type="term" value="C:HslUV protease complex"/>
    <property type="evidence" value="ECO:0007669"/>
    <property type="project" value="TreeGrafter"/>
</dbReference>
<dbReference type="GO" id="GO:0005524">
    <property type="term" value="F:ATP binding"/>
    <property type="evidence" value="ECO:0007669"/>
    <property type="project" value="UniProtKB-UniRule"/>
</dbReference>
<dbReference type="GO" id="GO:0016887">
    <property type="term" value="F:ATP hydrolysis activity"/>
    <property type="evidence" value="ECO:0007669"/>
    <property type="project" value="InterPro"/>
</dbReference>
<dbReference type="GO" id="GO:0140662">
    <property type="term" value="F:ATP-dependent protein folding chaperone"/>
    <property type="evidence" value="ECO:0007669"/>
    <property type="project" value="InterPro"/>
</dbReference>
<dbReference type="GO" id="GO:0046983">
    <property type="term" value="F:protein dimerization activity"/>
    <property type="evidence" value="ECO:0007669"/>
    <property type="project" value="InterPro"/>
</dbReference>
<dbReference type="GO" id="GO:0051082">
    <property type="term" value="F:unfolded protein binding"/>
    <property type="evidence" value="ECO:0007669"/>
    <property type="project" value="UniProtKB-UniRule"/>
</dbReference>
<dbReference type="GO" id="GO:0008270">
    <property type="term" value="F:zinc ion binding"/>
    <property type="evidence" value="ECO:0007669"/>
    <property type="project" value="InterPro"/>
</dbReference>
<dbReference type="GO" id="GO:0051301">
    <property type="term" value="P:cell division"/>
    <property type="evidence" value="ECO:0007669"/>
    <property type="project" value="TreeGrafter"/>
</dbReference>
<dbReference type="GO" id="GO:0051603">
    <property type="term" value="P:proteolysis involved in protein catabolic process"/>
    <property type="evidence" value="ECO:0007669"/>
    <property type="project" value="TreeGrafter"/>
</dbReference>
<dbReference type="CDD" id="cd19497">
    <property type="entry name" value="RecA-like_ClpX"/>
    <property type="match status" value="1"/>
</dbReference>
<dbReference type="FunFam" id="1.10.8.60:FF:000002">
    <property type="entry name" value="ATP-dependent Clp protease ATP-binding subunit ClpX"/>
    <property type="match status" value="1"/>
</dbReference>
<dbReference type="FunFam" id="3.40.50.300:FF:000005">
    <property type="entry name" value="ATP-dependent Clp protease ATP-binding subunit ClpX"/>
    <property type="match status" value="1"/>
</dbReference>
<dbReference type="Gene3D" id="1.10.8.60">
    <property type="match status" value="1"/>
</dbReference>
<dbReference type="Gene3D" id="6.20.220.10">
    <property type="entry name" value="ClpX chaperone, C4-type zinc finger domain"/>
    <property type="match status" value="1"/>
</dbReference>
<dbReference type="Gene3D" id="3.40.50.300">
    <property type="entry name" value="P-loop containing nucleotide triphosphate hydrolases"/>
    <property type="match status" value="1"/>
</dbReference>
<dbReference type="HAMAP" id="MF_00175">
    <property type="entry name" value="ClpX"/>
    <property type="match status" value="1"/>
</dbReference>
<dbReference type="InterPro" id="IPR003593">
    <property type="entry name" value="AAA+_ATPase"/>
</dbReference>
<dbReference type="InterPro" id="IPR050052">
    <property type="entry name" value="ATP-dep_Clp_protease_ClpX"/>
</dbReference>
<dbReference type="InterPro" id="IPR003959">
    <property type="entry name" value="ATPase_AAA_core"/>
</dbReference>
<dbReference type="InterPro" id="IPR019489">
    <property type="entry name" value="Clp_ATPase_C"/>
</dbReference>
<dbReference type="InterPro" id="IPR004487">
    <property type="entry name" value="Clp_protease_ATP-bd_su_ClpX"/>
</dbReference>
<dbReference type="InterPro" id="IPR046425">
    <property type="entry name" value="ClpX_bact"/>
</dbReference>
<dbReference type="InterPro" id="IPR027417">
    <property type="entry name" value="P-loop_NTPase"/>
</dbReference>
<dbReference type="InterPro" id="IPR010603">
    <property type="entry name" value="Znf_CppX_C4"/>
</dbReference>
<dbReference type="InterPro" id="IPR038366">
    <property type="entry name" value="Znf_CppX_C4_sf"/>
</dbReference>
<dbReference type="NCBIfam" id="TIGR00382">
    <property type="entry name" value="clpX"/>
    <property type="match status" value="1"/>
</dbReference>
<dbReference type="NCBIfam" id="NF003745">
    <property type="entry name" value="PRK05342.1"/>
    <property type="match status" value="1"/>
</dbReference>
<dbReference type="PANTHER" id="PTHR48102:SF7">
    <property type="entry name" value="ATP-DEPENDENT CLP PROTEASE ATP-BINDING SUBUNIT CLPX-LIKE, MITOCHONDRIAL"/>
    <property type="match status" value="1"/>
</dbReference>
<dbReference type="PANTHER" id="PTHR48102">
    <property type="entry name" value="ATP-DEPENDENT CLP PROTEASE ATP-BINDING SUBUNIT CLPX-LIKE, MITOCHONDRIAL-RELATED"/>
    <property type="match status" value="1"/>
</dbReference>
<dbReference type="Pfam" id="PF07724">
    <property type="entry name" value="AAA_2"/>
    <property type="match status" value="1"/>
</dbReference>
<dbReference type="Pfam" id="PF10431">
    <property type="entry name" value="ClpB_D2-small"/>
    <property type="match status" value="1"/>
</dbReference>
<dbReference type="Pfam" id="PF06689">
    <property type="entry name" value="zf-C4_ClpX"/>
    <property type="match status" value="1"/>
</dbReference>
<dbReference type="SMART" id="SM00382">
    <property type="entry name" value="AAA"/>
    <property type="match status" value="1"/>
</dbReference>
<dbReference type="SMART" id="SM01086">
    <property type="entry name" value="ClpB_D2-small"/>
    <property type="match status" value="1"/>
</dbReference>
<dbReference type="SMART" id="SM00994">
    <property type="entry name" value="zf-C4_ClpX"/>
    <property type="match status" value="1"/>
</dbReference>
<dbReference type="SUPFAM" id="SSF57716">
    <property type="entry name" value="Glucocorticoid receptor-like (DNA-binding domain)"/>
    <property type="match status" value="1"/>
</dbReference>
<dbReference type="SUPFAM" id="SSF52540">
    <property type="entry name" value="P-loop containing nucleoside triphosphate hydrolases"/>
    <property type="match status" value="1"/>
</dbReference>
<dbReference type="PROSITE" id="PS51902">
    <property type="entry name" value="CLPX_ZB"/>
    <property type="match status" value="1"/>
</dbReference>
<protein>
    <recommendedName>
        <fullName evidence="1">ATP-dependent Clp protease ATP-binding subunit ClpX</fullName>
    </recommendedName>
</protein>
<feature type="chain" id="PRO_1000123843" description="ATP-dependent Clp protease ATP-binding subunit ClpX">
    <location>
        <begin position="1"/>
        <end position="426"/>
    </location>
</feature>
<feature type="domain" description="ClpX-type ZB" evidence="2">
    <location>
        <begin position="1"/>
        <end position="54"/>
    </location>
</feature>
<feature type="binding site" evidence="2">
    <location>
        <position position="13"/>
    </location>
    <ligand>
        <name>Zn(2+)</name>
        <dbReference type="ChEBI" id="CHEBI:29105"/>
    </ligand>
</feature>
<feature type="binding site" evidence="2">
    <location>
        <position position="16"/>
    </location>
    <ligand>
        <name>Zn(2+)</name>
        <dbReference type="ChEBI" id="CHEBI:29105"/>
    </ligand>
</feature>
<feature type="binding site" evidence="2">
    <location>
        <position position="35"/>
    </location>
    <ligand>
        <name>Zn(2+)</name>
        <dbReference type="ChEBI" id="CHEBI:29105"/>
    </ligand>
</feature>
<feature type="binding site" evidence="2">
    <location>
        <position position="38"/>
    </location>
    <ligand>
        <name>Zn(2+)</name>
        <dbReference type="ChEBI" id="CHEBI:29105"/>
    </ligand>
</feature>
<feature type="binding site" evidence="1">
    <location>
        <begin position="122"/>
        <end position="129"/>
    </location>
    <ligand>
        <name>ATP</name>
        <dbReference type="ChEBI" id="CHEBI:30616"/>
    </ligand>
</feature>
<organism>
    <name type="scientific">Mycobacterium bovis (strain BCG / Tokyo 172 / ATCC 35737 / TMC 1019)</name>
    <dbReference type="NCBI Taxonomy" id="561275"/>
    <lineage>
        <taxon>Bacteria</taxon>
        <taxon>Bacillati</taxon>
        <taxon>Actinomycetota</taxon>
        <taxon>Actinomycetes</taxon>
        <taxon>Mycobacteriales</taxon>
        <taxon>Mycobacteriaceae</taxon>
        <taxon>Mycobacterium</taxon>
        <taxon>Mycobacterium tuberculosis complex</taxon>
    </lineage>
</organism>
<reference key="1">
    <citation type="journal article" date="2009" name="Vaccine">
        <title>Whole genome sequence analysis of Mycobacterium bovis bacillus Calmette-Guerin (BCG) Tokyo 172: a comparative study of BCG vaccine substrains.</title>
        <authorList>
            <person name="Seki M."/>
            <person name="Honda I."/>
            <person name="Fujita I."/>
            <person name="Yano I."/>
            <person name="Yamamoto S."/>
            <person name="Koyama A."/>
        </authorList>
    </citation>
    <scope>NUCLEOTIDE SEQUENCE [LARGE SCALE GENOMIC DNA]</scope>
    <source>
        <strain>BCG / Tokyo 172 / ATCC 35737 / TMC 1019</strain>
    </source>
</reference>
<accession>C1AES4</accession>
<sequence length="426" mass="46797">MARIGDGGDLLKCSFCGKSQKQVKKLIAGPGVYICDECIDLCNEIIEEELADADDVKLDELPKPAEIREFLEGYVIGQDTAKRTLAVAVYNHYKRIQAGEKGRDSRCEPVELTKSNILMLGPTGCGKTYLAQTLAKMLNVPFAIADATALTEAGYVGEDVENILLKLIQAADYDVKRAETGIIYIDEVDKIARKSENPSITRDVSGEGVQQALLKILEGTQASVPPQGARKHPHQEFIQIDTTNVLFIVAGAFAGLEKIIYERVGKRGLGFGAEVRSKAEIDTTDHFADVMPEDLIKFGLIPEFIGRLPVVASVTNLDKESLVKILSEPKNALVKQYIRLFEMDGVELEFTDDALEAIADQAIHRGTGARGLRAIMEEVLLPVMYDIPSRDDVAKVVVTKETVQDNVLPTIVPRKPSRSERRDKSA</sequence>
<gene>
    <name evidence="1" type="primary">clpX</name>
    <name type="ordered locus">JTY_2471</name>
</gene>
<evidence type="ECO:0000255" key="1">
    <source>
        <dbReference type="HAMAP-Rule" id="MF_00175"/>
    </source>
</evidence>
<evidence type="ECO:0000255" key="2">
    <source>
        <dbReference type="PROSITE-ProRule" id="PRU01250"/>
    </source>
</evidence>
<keyword id="KW-0067">ATP-binding</keyword>
<keyword id="KW-0143">Chaperone</keyword>
<keyword id="KW-0479">Metal-binding</keyword>
<keyword id="KW-0547">Nucleotide-binding</keyword>
<keyword id="KW-0862">Zinc</keyword>
<proteinExistence type="inferred from homology"/>
<comment type="function">
    <text evidence="1">ATP-dependent specificity component of the Clp protease. It directs the protease to specific substrates. Can perform chaperone functions in the absence of ClpP.</text>
</comment>
<comment type="subunit">
    <text evidence="1">Component of the ClpX-ClpP complex. Forms a hexameric ring that, in the presence of ATP, binds to fourteen ClpP subunits assembled into a disk-like structure with a central cavity, resembling the structure of eukaryotic proteasomes.</text>
</comment>
<comment type="similarity">
    <text evidence="1">Belongs to the ClpX chaperone family.</text>
</comment>